<proteinExistence type="inferred from homology"/>
<comment type="function">
    <text evidence="1">Catalyzes the transfer of an acyl group from acyl-phosphate (acyl-PO(4)) to glycerol-3-phosphate (G3P) to form lysophosphatidic acid (LPA). This enzyme utilizes acyl-phosphate as fatty acyl donor, but not acyl-CoA or acyl-ACP.</text>
</comment>
<comment type="catalytic activity">
    <reaction evidence="1">
        <text>an acyl phosphate + sn-glycerol 3-phosphate = a 1-acyl-sn-glycero-3-phosphate + phosphate</text>
        <dbReference type="Rhea" id="RHEA:34075"/>
        <dbReference type="ChEBI" id="CHEBI:43474"/>
        <dbReference type="ChEBI" id="CHEBI:57597"/>
        <dbReference type="ChEBI" id="CHEBI:57970"/>
        <dbReference type="ChEBI" id="CHEBI:59918"/>
        <dbReference type="EC" id="2.3.1.275"/>
    </reaction>
</comment>
<comment type="pathway">
    <text evidence="1">Lipid metabolism; phospholipid metabolism.</text>
</comment>
<comment type="subunit">
    <text evidence="1">Probably interacts with PlsX.</text>
</comment>
<comment type="subcellular location">
    <subcellularLocation>
        <location evidence="1">Cell inner membrane</location>
        <topology evidence="1">Multi-pass membrane protein</topology>
    </subcellularLocation>
</comment>
<comment type="similarity">
    <text evidence="1">Belongs to the PlsY family.</text>
</comment>
<keyword id="KW-0997">Cell inner membrane</keyword>
<keyword id="KW-1003">Cell membrane</keyword>
<keyword id="KW-0444">Lipid biosynthesis</keyword>
<keyword id="KW-0443">Lipid metabolism</keyword>
<keyword id="KW-0472">Membrane</keyword>
<keyword id="KW-0594">Phospholipid biosynthesis</keyword>
<keyword id="KW-1208">Phospholipid metabolism</keyword>
<keyword id="KW-0808">Transferase</keyword>
<keyword id="KW-0812">Transmembrane</keyword>
<keyword id="KW-1133">Transmembrane helix</keyword>
<accession>Q9ZAF3</accession>
<gene>
    <name evidence="1" type="primary">plsY</name>
    <name type="ordered locus">TT_C0841</name>
</gene>
<protein>
    <recommendedName>
        <fullName evidence="1">Glycerol-3-phosphate acyltransferase</fullName>
    </recommendedName>
    <alternativeName>
        <fullName evidence="1">Acyl-PO4 G3P acyltransferase</fullName>
    </alternativeName>
    <alternativeName>
        <fullName evidence="1">Acyl-phosphate--glycerol-3-phosphate acyltransferase</fullName>
    </alternativeName>
    <alternativeName>
        <fullName evidence="1">G3P acyltransferase</fullName>
        <shortName evidence="1">GPAT</shortName>
        <ecNumber evidence="1">2.3.1.275</ecNumber>
    </alternativeName>
    <alternativeName>
        <fullName evidence="1">Lysophosphatidic acid synthase</fullName>
        <shortName evidence="1">LPA synthase</shortName>
    </alternativeName>
</protein>
<evidence type="ECO:0000255" key="1">
    <source>
        <dbReference type="HAMAP-Rule" id="MF_01043"/>
    </source>
</evidence>
<organism>
    <name type="scientific">Thermus thermophilus (strain ATCC BAA-163 / DSM 7039 / HB27)</name>
    <dbReference type="NCBI Taxonomy" id="262724"/>
    <lineage>
        <taxon>Bacteria</taxon>
        <taxon>Thermotogati</taxon>
        <taxon>Deinococcota</taxon>
        <taxon>Deinococci</taxon>
        <taxon>Thermales</taxon>
        <taxon>Thermaceae</taxon>
        <taxon>Thermus</taxon>
    </lineage>
</organism>
<reference key="1">
    <citation type="journal article" date="2000" name="J. Bacteriol.">
        <title>Organization and expression of a Thermus thermophilus arginine cluster: presence of unidentified open reading frames and absence of a Shine-Dalgarno sequence.</title>
        <authorList>
            <person name="Sanchez R."/>
            <person name="Roovers M."/>
            <person name="Glansdorff N."/>
        </authorList>
    </citation>
    <scope>NUCLEOTIDE SEQUENCE [GENOMIC DNA]</scope>
</reference>
<reference key="2">
    <citation type="journal article" date="2004" name="Nat. Biotechnol.">
        <title>The genome sequence of the extreme thermophile Thermus thermophilus.</title>
        <authorList>
            <person name="Henne A."/>
            <person name="Brueggemann H."/>
            <person name="Raasch C."/>
            <person name="Wiezer A."/>
            <person name="Hartsch T."/>
            <person name="Liesegang H."/>
            <person name="Johann A."/>
            <person name="Lienard T."/>
            <person name="Gohl O."/>
            <person name="Martinez-Arias R."/>
            <person name="Jacobi C."/>
            <person name="Starkuviene V."/>
            <person name="Schlenczeck S."/>
            <person name="Dencker S."/>
            <person name="Huber R."/>
            <person name="Klenk H.-P."/>
            <person name="Kramer W."/>
            <person name="Merkl R."/>
            <person name="Gottschalk G."/>
            <person name="Fritz H.-J."/>
        </authorList>
    </citation>
    <scope>NUCLEOTIDE SEQUENCE [LARGE SCALE GENOMIC DNA]</scope>
    <source>
        <strain>ATCC BAA-163 / DSM 7039 / HB27</strain>
    </source>
</reference>
<sequence>MTAAVWTLLLAYLFGSIPAGVLVARTYGVDIRKVGSGNIGATNVLRALGWGPALVVAFFDVFKGGIAVLVARAFGLSDWMLGGVALMAVLGHNYSVFLRFRGGKGVATSFGTLLFLDPALALWTFPIGLSVILLTRYVSAGSMTGGVAAFVLSLALGRPLWEVATVFLMALLIFWTHRENLKRLQEGTERRLGERAEAR</sequence>
<name>PLSY_THET2</name>
<dbReference type="EC" id="2.3.1.275" evidence="1"/>
<dbReference type="EMBL" id="Y18353">
    <property type="protein sequence ID" value="CAA77137.1"/>
    <property type="molecule type" value="Genomic_DNA"/>
</dbReference>
<dbReference type="EMBL" id="AE017221">
    <property type="protein sequence ID" value="AAS81187.1"/>
    <property type="molecule type" value="Genomic_DNA"/>
</dbReference>
<dbReference type="RefSeq" id="WP_011173272.1">
    <property type="nucleotide sequence ID" value="NC_005835.1"/>
</dbReference>
<dbReference type="SMR" id="Q9ZAF3"/>
<dbReference type="KEGG" id="tth:TT_C0841"/>
<dbReference type="eggNOG" id="COG0344">
    <property type="taxonomic scope" value="Bacteria"/>
</dbReference>
<dbReference type="HOGENOM" id="CLU_081254_0_0_0"/>
<dbReference type="OrthoDB" id="9777124at2"/>
<dbReference type="UniPathway" id="UPA00085"/>
<dbReference type="Proteomes" id="UP000000592">
    <property type="component" value="Chromosome"/>
</dbReference>
<dbReference type="GO" id="GO:0005886">
    <property type="term" value="C:plasma membrane"/>
    <property type="evidence" value="ECO:0007669"/>
    <property type="project" value="UniProtKB-SubCell"/>
</dbReference>
<dbReference type="GO" id="GO:0043772">
    <property type="term" value="F:acyl-phosphate glycerol-3-phosphate acyltransferase activity"/>
    <property type="evidence" value="ECO:0007669"/>
    <property type="project" value="UniProtKB-UniRule"/>
</dbReference>
<dbReference type="GO" id="GO:0008654">
    <property type="term" value="P:phospholipid biosynthetic process"/>
    <property type="evidence" value="ECO:0007669"/>
    <property type="project" value="UniProtKB-UniRule"/>
</dbReference>
<dbReference type="HAMAP" id="MF_01043">
    <property type="entry name" value="PlsY"/>
    <property type="match status" value="1"/>
</dbReference>
<dbReference type="InterPro" id="IPR003811">
    <property type="entry name" value="G3P_acylTferase_PlsY"/>
</dbReference>
<dbReference type="NCBIfam" id="TIGR00023">
    <property type="entry name" value="glycerol-3-phosphate 1-O-acyltransferase PlsY"/>
    <property type="match status" value="1"/>
</dbReference>
<dbReference type="PANTHER" id="PTHR30309:SF0">
    <property type="entry name" value="GLYCEROL-3-PHOSPHATE ACYLTRANSFERASE-RELATED"/>
    <property type="match status" value="1"/>
</dbReference>
<dbReference type="PANTHER" id="PTHR30309">
    <property type="entry name" value="INNER MEMBRANE PROTEIN YGIH"/>
    <property type="match status" value="1"/>
</dbReference>
<dbReference type="Pfam" id="PF02660">
    <property type="entry name" value="G3P_acyltransf"/>
    <property type="match status" value="1"/>
</dbReference>
<dbReference type="SMART" id="SM01207">
    <property type="entry name" value="G3P_acyltransf"/>
    <property type="match status" value="1"/>
</dbReference>
<feature type="chain" id="PRO_0000188481" description="Glycerol-3-phosphate acyltransferase">
    <location>
        <begin position="1"/>
        <end position="199"/>
    </location>
</feature>
<feature type="transmembrane region" description="Helical" evidence="1">
    <location>
        <begin position="3"/>
        <end position="23"/>
    </location>
</feature>
<feature type="transmembrane region" description="Helical" evidence="1">
    <location>
        <begin position="50"/>
        <end position="70"/>
    </location>
</feature>
<feature type="transmembrane region" description="Helical" evidence="1">
    <location>
        <begin position="78"/>
        <end position="98"/>
    </location>
</feature>
<feature type="transmembrane region" description="Helical" evidence="1">
    <location>
        <begin position="113"/>
        <end position="133"/>
    </location>
</feature>
<feature type="transmembrane region" description="Helical" evidence="1">
    <location>
        <begin position="154"/>
        <end position="174"/>
    </location>
</feature>